<protein>
    <recommendedName>
        <fullName evidence="1">Ribosomal RNA small subunit methyltransferase H</fullName>
        <ecNumber evidence="1">2.1.1.199</ecNumber>
    </recommendedName>
    <alternativeName>
        <fullName evidence="1">16S rRNA m(4)C1402 methyltransferase</fullName>
    </alternativeName>
    <alternativeName>
        <fullName evidence="1">rRNA (cytosine-N(4)-)-methyltransferase RsmH</fullName>
    </alternativeName>
</protein>
<proteinExistence type="inferred from homology"/>
<name>RSMH_VESOH</name>
<comment type="function">
    <text evidence="1">Specifically methylates the N4 position of cytidine in position 1402 (C1402) of 16S rRNA.</text>
</comment>
<comment type="catalytic activity">
    <reaction evidence="1">
        <text>cytidine(1402) in 16S rRNA + S-adenosyl-L-methionine = N(4)-methylcytidine(1402) in 16S rRNA + S-adenosyl-L-homocysteine + H(+)</text>
        <dbReference type="Rhea" id="RHEA:42928"/>
        <dbReference type="Rhea" id="RHEA-COMP:10286"/>
        <dbReference type="Rhea" id="RHEA-COMP:10287"/>
        <dbReference type="ChEBI" id="CHEBI:15378"/>
        <dbReference type="ChEBI" id="CHEBI:57856"/>
        <dbReference type="ChEBI" id="CHEBI:59789"/>
        <dbReference type="ChEBI" id="CHEBI:74506"/>
        <dbReference type="ChEBI" id="CHEBI:82748"/>
        <dbReference type="EC" id="2.1.1.199"/>
    </reaction>
</comment>
<comment type="subcellular location">
    <subcellularLocation>
        <location evidence="1">Cytoplasm</location>
    </subcellularLocation>
</comment>
<comment type="similarity">
    <text evidence="1">Belongs to the methyltransferase superfamily. RsmH family.</text>
</comment>
<sequence length="307" mass="34973">MMPEYHQSVMFNESMYALNIKTDGIYIDATFGRGGHAQGILNRLSKKGRLIAFDQDINAIEYANKNLVDNRLTLIHSAFSKMLSIITKQGLIGRIDGILIDLGVSSPQLENAQRGFSFRVDGPLDMRMNQTTGMSATQWLKSANEEEIANVIYQFSNEKKSRHIANKIKKYQKNHVLETTLELANIVSKVVKKQKNKHPATRTFQAIRIFINQELKQLISVLEQSKDILSKNGRLSIISFHSIEDRIVKRFIQKNSRQKTLPKGLPIIENEIEKTYLKDLGKYLTSKAEIDNNKRARSAILRVASKN</sequence>
<keyword id="KW-0963">Cytoplasm</keyword>
<keyword id="KW-0489">Methyltransferase</keyword>
<keyword id="KW-1185">Reference proteome</keyword>
<keyword id="KW-0698">rRNA processing</keyword>
<keyword id="KW-0949">S-adenosyl-L-methionine</keyword>
<keyword id="KW-0808">Transferase</keyword>
<dbReference type="EC" id="2.1.1.199" evidence="1"/>
<dbReference type="EMBL" id="AP009247">
    <property type="protein sequence ID" value="BAF61411.1"/>
    <property type="molecule type" value="Genomic_DNA"/>
</dbReference>
<dbReference type="RefSeq" id="WP_011929681.1">
    <property type="nucleotide sequence ID" value="NC_009465.1"/>
</dbReference>
<dbReference type="SMR" id="A5CX97"/>
<dbReference type="STRING" id="412965.COSY_0282"/>
<dbReference type="KEGG" id="vok:COSY_0282"/>
<dbReference type="eggNOG" id="COG0275">
    <property type="taxonomic scope" value="Bacteria"/>
</dbReference>
<dbReference type="HOGENOM" id="CLU_038422_2_0_6"/>
<dbReference type="OrthoDB" id="9806637at2"/>
<dbReference type="Proteomes" id="UP000000247">
    <property type="component" value="Chromosome"/>
</dbReference>
<dbReference type="GO" id="GO:0005737">
    <property type="term" value="C:cytoplasm"/>
    <property type="evidence" value="ECO:0007669"/>
    <property type="project" value="UniProtKB-SubCell"/>
</dbReference>
<dbReference type="GO" id="GO:0071424">
    <property type="term" value="F:rRNA (cytosine-N4-)-methyltransferase activity"/>
    <property type="evidence" value="ECO:0007669"/>
    <property type="project" value="UniProtKB-UniRule"/>
</dbReference>
<dbReference type="GO" id="GO:0070475">
    <property type="term" value="P:rRNA base methylation"/>
    <property type="evidence" value="ECO:0007669"/>
    <property type="project" value="UniProtKB-UniRule"/>
</dbReference>
<dbReference type="Gene3D" id="1.10.150.170">
    <property type="entry name" value="Putative methyltransferase TM0872, insert domain"/>
    <property type="match status" value="1"/>
</dbReference>
<dbReference type="Gene3D" id="3.40.50.150">
    <property type="entry name" value="Vaccinia Virus protein VP39"/>
    <property type="match status" value="1"/>
</dbReference>
<dbReference type="HAMAP" id="MF_01007">
    <property type="entry name" value="16SrRNA_methyltr_H"/>
    <property type="match status" value="1"/>
</dbReference>
<dbReference type="InterPro" id="IPR002903">
    <property type="entry name" value="RsmH"/>
</dbReference>
<dbReference type="InterPro" id="IPR023397">
    <property type="entry name" value="SAM-dep_MeTrfase_MraW_recog"/>
</dbReference>
<dbReference type="InterPro" id="IPR029063">
    <property type="entry name" value="SAM-dependent_MTases_sf"/>
</dbReference>
<dbReference type="NCBIfam" id="TIGR00006">
    <property type="entry name" value="16S rRNA (cytosine(1402)-N(4))-methyltransferase RsmH"/>
    <property type="match status" value="1"/>
</dbReference>
<dbReference type="PANTHER" id="PTHR11265:SF0">
    <property type="entry name" value="12S RRNA N4-METHYLCYTIDINE METHYLTRANSFERASE"/>
    <property type="match status" value="1"/>
</dbReference>
<dbReference type="PANTHER" id="PTHR11265">
    <property type="entry name" value="S-ADENOSYL-METHYLTRANSFERASE MRAW"/>
    <property type="match status" value="1"/>
</dbReference>
<dbReference type="Pfam" id="PF01795">
    <property type="entry name" value="Methyltransf_5"/>
    <property type="match status" value="1"/>
</dbReference>
<dbReference type="PIRSF" id="PIRSF004486">
    <property type="entry name" value="MraW"/>
    <property type="match status" value="1"/>
</dbReference>
<dbReference type="SUPFAM" id="SSF81799">
    <property type="entry name" value="Putative methyltransferase TM0872, insert domain"/>
    <property type="match status" value="1"/>
</dbReference>
<dbReference type="SUPFAM" id="SSF53335">
    <property type="entry name" value="S-adenosyl-L-methionine-dependent methyltransferases"/>
    <property type="match status" value="1"/>
</dbReference>
<reference key="1">
    <citation type="journal article" date="2007" name="Curr. Biol.">
        <title>Reduced genome of the thioautotrophic intracellular symbiont in a deep-sea clam, Calyptogena okutanii.</title>
        <authorList>
            <person name="Kuwahara H."/>
            <person name="Yoshida T."/>
            <person name="Takaki Y."/>
            <person name="Shimamura S."/>
            <person name="Nishi S."/>
            <person name="Harada M."/>
            <person name="Matsuyama K."/>
            <person name="Takishita K."/>
            <person name="Kawato M."/>
            <person name="Uematsu K."/>
            <person name="Fujiwara Y."/>
            <person name="Sato T."/>
            <person name="Kato C."/>
            <person name="Kitagawa M."/>
            <person name="Kato I."/>
            <person name="Maruyama T."/>
        </authorList>
    </citation>
    <scope>NUCLEOTIDE SEQUENCE [LARGE SCALE GENOMIC DNA]</scope>
    <source>
        <strain>HA</strain>
    </source>
</reference>
<gene>
    <name evidence="1" type="primary">rsmH</name>
    <name type="synonym">mraW</name>
    <name type="ordered locus">COSY_0282</name>
</gene>
<evidence type="ECO:0000255" key="1">
    <source>
        <dbReference type="HAMAP-Rule" id="MF_01007"/>
    </source>
</evidence>
<accession>A5CX97</accession>
<feature type="chain" id="PRO_0000387207" description="Ribosomal RNA small subunit methyltransferase H">
    <location>
        <begin position="1"/>
        <end position="307"/>
    </location>
</feature>
<feature type="binding site" evidence="1">
    <location>
        <begin position="34"/>
        <end position="36"/>
    </location>
    <ligand>
        <name>S-adenosyl-L-methionine</name>
        <dbReference type="ChEBI" id="CHEBI:59789"/>
    </ligand>
</feature>
<feature type="binding site" evidence="1">
    <location>
        <position position="54"/>
    </location>
    <ligand>
        <name>S-adenosyl-L-methionine</name>
        <dbReference type="ChEBI" id="CHEBI:59789"/>
    </ligand>
</feature>
<feature type="binding site" evidence="1">
    <location>
        <position position="79"/>
    </location>
    <ligand>
        <name>S-adenosyl-L-methionine</name>
        <dbReference type="ChEBI" id="CHEBI:59789"/>
    </ligand>
</feature>
<feature type="binding site" evidence="1">
    <location>
        <position position="101"/>
    </location>
    <ligand>
        <name>S-adenosyl-L-methionine</name>
        <dbReference type="ChEBI" id="CHEBI:59789"/>
    </ligand>
</feature>
<feature type="binding site" evidence="1">
    <location>
        <position position="108"/>
    </location>
    <ligand>
        <name>S-adenosyl-L-methionine</name>
        <dbReference type="ChEBI" id="CHEBI:59789"/>
    </ligand>
</feature>
<organism>
    <name type="scientific">Vesicomyosocius okutanii subsp. Calyptogena okutanii (strain HA)</name>
    <dbReference type="NCBI Taxonomy" id="412965"/>
    <lineage>
        <taxon>Bacteria</taxon>
        <taxon>Pseudomonadati</taxon>
        <taxon>Pseudomonadota</taxon>
        <taxon>Gammaproteobacteria</taxon>
        <taxon>Candidatus Pseudothioglobaceae</taxon>
        <taxon>Candidatus Vesicomyosocius</taxon>
    </lineage>
</organism>